<comment type="function">
    <text evidence="1 6 7 8">The PI(3,5)P2 regulatory complex regulates both the synthesis and turnover of phosphatidylinositol 3,5-bisphosphate (PtdIns(3,5)P2). Catalyzes the phosphorylation of phosphatidylinositol 3-phosphate on the fifth hydroxyl of the myo-inositol ring, to form phosphatidylinositol 3,5-bisphosphate (By similarity). Plays an important role in maintenance of endomembrane homeostasis including endocytosis, vacuole formation, and vacuolar acidification processes. Required for development of viable pollen. Might mediate recycling of auxin transporters.</text>
</comment>
<comment type="catalytic activity">
    <reaction evidence="10">
        <text>a 1,2-diacyl-sn-glycero-3-phospho-(1D-myo-inositol-3-phosphate) + ATP = a 1,2-diacyl-sn-glycero-3-phospho-(1D-myo-inositol-3,5-bisphosphate) + ADP + H(+)</text>
        <dbReference type="Rhea" id="RHEA:13609"/>
        <dbReference type="ChEBI" id="CHEBI:15378"/>
        <dbReference type="ChEBI" id="CHEBI:30616"/>
        <dbReference type="ChEBI" id="CHEBI:57923"/>
        <dbReference type="ChEBI" id="CHEBI:58088"/>
        <dbReference type="ChEBI" id="CHEBI:456216"/>
        <dbReference type="EC" id="2.7.1.150"/>
    </reaction>
</comment>
<comment type="cofactor">
    <cofactor evidence="1">
        <name>Mg(2+)</name>
        <dbReference type="ChEBI" id="CHEBI:18420"/>
    </cofactor>
    <cofactor evidence="1">
        <name>Mn(2+)</name>
        <dbReference type="ChEBI" id="CHEBI:29035"/>
    </cofactor>
</comment>
<comment type="subunit">
    <text evidence="1">Component of the PI(3,5)P2 regulatory complex at least composed of ATG18, SAC/FIG4, FAB1 and VAC14.</text>
</comment>
<comment type="subcellular location">
    <subcellularLocation>
        <location evidence="7">Endosome membrane</location>
        <topology evidence="7">Peripheral membrane protein</topology>
    </subcellularLocation>
</comment>
<comment type="alternative products">
    <event type="alternative splicing"/>
    <isoform>
        <id>Q0WUR5-1</id>
        <name>1</name>
        <sequence type="displayed"/>
    </isoform>
</comment>
<comment type="tissue specificity">
    <text evidence="6">Ubiquitous with highest expression levels in pollen, seed, and senescent leaves.</text>
</comment>
<comment type="disruption phenotype">
    <text evidence="6 7 8">Leaf-curling phenotype. Root growth inhibition, root gravitropic response, and hyposensitivity to exogenous auxin. Fab1a and fab1b double mutant displays an abnormal vacuolar phenotype late in pollen development leading to inviable pollen (PubMed:19846542).</text>
</comment>
<comment type="miscellaneous">
    <molecule>Isoform 1</molecule>
    <text>A number of isoforms are produced. According to EST sequences.</text>
</comment>
<gene>
    <name type="primary">FAB1A</name>
    <name type="ordered locus">At4g33240</name>
    <name type="ORF">F4I10.170</name>
</gene>
<protein>
    <recommendedName>
        <fullName>1-phosphatidylinositol-3-phosphate 5-kinase FAB1A</fullName>
        <shortName>Phosphatidylinositol 3-phosphate 5-kinase</shortName>
        <ecNumber evidence="10">2.7.1.150</ecNumber>
    </recommendedName>
    <alternativeName>
        <fullName>FYVE finger-containing phosphoinositide kinase</fullName>
    </alternativeName>
    <alternativeName>
        <fullName>PIKfyve</fullName>
    </alternativeName>
    <alternativeName>
        <fullName>Phosphatidylinositol 3-phosphate 5-kinase type III</fullName>
        <shortName>PIPkin-III</shortName>
        <shortName>Type III PIP kinase</shortName>
    </alternativeName>
    <alternativeName>
        <fullName>Protein FORMS APLOID AND BINUCLEATE CELLS 1A</fullName>
    </alternativeName>
</protein>
<name>FAB1A_ARATH</name>
<organism>
    <name type="scientific">Arabidopsis thaliana</name>
    <name type="common">Mouse-ear cress</name>
    <dbReference type="NCBI Taxonomy" id="3702"/>
    <lineage>
        <taxon>Eukaryota</taxon>
        <taxon>Viridiplantae</taxon>
        <taxon>Streptophyta</taxon>
        <taxon>Embryophyta</taxon>
        <taxon>Tracheophyta</taxon>
        <taxon>Spermatophyta</taxon>
        <taxon>Magnoliopsida</taxon>
        <taxon>eudicotyledons</taxon>
        <taxon>Gunneridae</taxon>
        <taxon>Pentapetalae</taxon>
        <taxon>rosids</taxon>
        <taxon>malvids</taxon>
        <taxon>Brassicales</taxon>
        <taxon>Brassicaceae</taxon>
        <taxon>Camelineae</taxon>
        <taxon>Arabidopsis</taxon>
    </lineage>
</organism>
<sequence>MDSQDHKAPGFVDIVKSWIPRKSESSNMSRDFWMPDQSCPVCYECDAQFTVFNRRHHCRLCGRVFCAKCAANSIPSPSDETKDSHEEPERIRVCNYCYKQWEQGIVPPDNGASIISLHFSSSPSARSVASTTSNSSNCTIDSTAGPSPRPKMNPRASRRVSSNMDSEKSEQQNAKSRRSSDHYGHVLDSSDNQVEFFVNSSGRSDGEADDDDDYQSDFAQSYAQGNDYYGAINLDEVDHIYGSHEAHDVGVKIEPNISGFPPDQDLDSLNTETIDKTRQQENGWNDVKEGSPPCEESFEPEVVDFESDGLLWLPPEPENEEDEREAVLSDDDGDEGDRGDWGYLRPSNSFNEKDFHSKDKSSGAMKNVVEGHFRALVAQLLEVDNLPMVNEGDEEGWLDIITSLSWEAATLLKPDTSKSGGMDPGGYVKVKCIPCGRRSESMVVKGVVCKKNVAHRRMTSKIEKPRLLILGGALEYQRISNQLSSFDTLLQQEMDHLKMAVAKIDSHNPDILLVEKSVSRFAQEYLLAKDISLVLNIKRSLLERISRCTGAQIVPSIDQLTSPKLGYCDLFHVEKFVETHVSPCQVAKKMAKTLMFFDGCPKPLGCTILLKGAHEDELKKVKHVIQYGVFAAYHLALETSFLADEGASIHELPLQTPITVALPDKPSMVNRSISTIPGFTVSSAEKSPTTELRGEPHKANGDLTGNFTSSKTHFQGKLDGNDRIDPSERLLHNLDTVYCKPPETITSKDDGLVPTLESRQLSFHVEEPSVQKDQWSVLSGATEQVTDGGYTNDSAVIGNQNFNRQEQMESSKGDFHPSASDHQSILVSLSTRCVWKGSVCERAHLLRIKYYGSFDKPLGRFLRDNLFDQDQCCPSCTMPAEAHIHCYTHRQGSLTISVKKLPELLPGQREGKIWMWHRCLKCPRINGFPPATRRIVMSDAAWGLSFGKFLELSFSNHAAASRVANCGHSLHRDCLRFYGFGRMVACFRYASINIYAVTLPPAKLYFNYENQEWLQKESKEVIKKAEVLFNEVQEALSQISAKTMGAGSKGSTPNKIKLSLEELAGLLEQRKKEYKDSLQQMLNVVKDGQPTIDILLINKLRRLIIFDSYAWDECLAGAANMVRNNYLEAPKNSAPKVMGRNVSLEKLSDEKVKSIPTHVAICNDSLLQDADYETCLNQGKSFADTSGKFAIPEDVGSDRPPDCRMEFDPSEGGKDNFVESSQVVKPAHTESQFQATDLSDTLDAAWIGEQTTSENGIFRPPSRAASTNGTQIPDLRLLGSESELNFKGGPTNDEHTTQVQLPSPSFYYSLNKNYSLNSRKHIMAEDRPVYVSSYRELEWRSGARLLLPLGCNDLVLPVYDDEPTSIIAYALTSSEYKAQMSGSDKSRDRLDSGGSFSLFDSVNLLSLNSLSDLSVDMSRSLSSADEQVSQLLHSSLYLKDLHARISFTDEGPPGKVKYSVTCYYAKEFEALRMICCPSETDFIRSLGRCRKWGAQGGKSNVFFAKSLDDRFIIKQVTKTELESFIKFGPAYFKYLTESISTKSPTSLAKILGIYQVSSKHLKGGKEFKMDVLVMENLLFKRNFTRLYDLKGSTRARYNPDTSGSNTVLLDQNLVEAMPTSPIFVGSKAKRLLERAVWNDTSFLASIHVMDYSLLVGVDEERNELVLGIIDFMRQYTWDKHLETWVKTSGLLGGPKNSTPTVISPQQYKKRFRKAMTAYFLMVPDQWSPAAVVPSNSSSAEVKEEEEKDNPQAVGNKS</sequence>
<feature type="chain" id="PRO_0000421870" description="1-phosphatidylinositol-3-phosphate 5-kinase FAB1A">
    <location>
        <begin position="1"/>
        <end position="1757"/>
    </location>
</feature>
<feature type="domain" description="PIPK" evidence="4">
    <location>
        <begin position="1395"/>
        <end position="1719"/>
    </location>
</feature>
<feature type="zinc finger region" description="FYVE-type" evidence="3">
    <location>
        <begin position="36"/>
        <end position="102"/>
    </location>
</feature>
<feature type="region of interest" description="Disordered" evidence="5">
    <location>
        <begin position="125"/>
        <end position="193"/>
    </location>
</feature>
<feature type="region of interest" description="Disordered" evidence="5">
    <location>
        <begin position="276"/>
        <end position="297"/>
    </location>
</feature>
<feature type="region of interest" description="Disordered" evidence="5">
    <location>
        <begin position="313"/>
        <end position="346"/>
    </location>
</feature>
<feature type="region of interest" description="Disordered" evidence="5">
    <location>
        <begin position="684"/>
        <end position="709"/>
    </location>
</feature>
<feature type="region of interest" description="Disordered" evidence="5">
    <location>
        <begin position="1729"/>
        <end position="1757"/>
    </location>
</feature>
<feature type="coiled-coil region" evidence="2">
    <location>
        <begin position="1014"/>
        <end position="1087"/>
    </location>
</feature>
<feature type="compositionally biased region" description="Polar residues" evidence="5">
    <location>
        <begin position="134"/>
        <end position="145"/>
    </location>
</feature>
<feature type="compositionally biased region" description="Acidic residues" evidence="5">
    <location>
        <begin position="317"/>
        <end position="337"/>
    </location>
</feature>
<feature type="compositionally biased region" description="Low complexity" evidence="5">
    <location>
        <begin position="1729"/>
        <end position="1739"/>
    </location>
</feature>
<feature type="binding site" evidence="3">
    <location>
        <position position="42"/>
    </location>
    <ligand>
        <name>Zn(2+)</name>
        <dbReference type="ChEBI" id="CHEBI:29105"/>
        <label>1</label>
    </ligand>
</feature>
<feature type="binding site" evidence="3">
    <location>
        <position position="45"/>
    </location>
    <ligand>
        <name>Zn(2+)</name>
        <dbReference type="ChEBI" id="CHEBI:29105"/>
        <label>1</label>
    </ligand>
</feature>
<feature type="binding site" evidence="3">
    <location>
        <position position="58"/>
    </location>
    <ligand>
        <name>Zn(2+)</name>
        <dbReference type="ChEBI" id="CHEBI:29105"/>
        <label>2</label>
    </ligand>
</feature>
<feature type="binding site" evidence="3">
    <location>
        <position position="61"/>
    </location>
    <ligand>
        <name>Zn(2+)</name>
        <dbReference type="ChEBI" id="CHEBI:29105"/>
        <label>2</label>
    </ligand>
</feature>
<feature type="binding site" evidence="3">
    <location>
        <position position="66"/>
    </location>
    <ligand>
        <name>Zn(2+)</name>
        <dbReference type="ChEBI" id="CHEBI:29105"/>
        <label>1</label>
    </ligand>
</feature>
<feature type="binding site" evidence="3">
    <location>
        <position position="69"/>
    </location>
    <ligand>
        <name>Zn(2+)</name>
        <dbReference type="ChEBI" id="CHEBI:29105"/>
        <label>1</label>
    </ligand>
</feature>
<feature type="binding site" evidence="3">
    <location>
        <position position="94"/>
    </location>
    <ligand>
        <name>Zn(2+)</name>
        <dbReference type="ChEBI" id="CHEBI:29105"/>
        <label>2</label>
    </ligand>
</feature>
<feature type="binding site" evidence="3">
    <location>
        <position position="97"/>
    </location>
    <ligand>
        <name>Zn(2+)</name>
        <dbReference type="ChEBI" id="CHEBI:29105"/>
        <label>2</label>
    </ligand>
</feature>
<feature type="sequence conflict" description="In Ref. 1; CAB36798/CAB80041." evidence="9" ref="1">
    <original>Q</original>
    <variation>H</variation>
    <location>
        <position position="279"/>
    </location>
</feature>
<feature type="sequence conflict" description="In Ref. 1; CAB36798/CAB80041." evidence="9" ref="1">
    <original>N</original>
    <variation>T</variation>
    <location>
        <position position="285"/>
    </location>
</feature>
<evidence type="ECO:0000250" key="1"/>
<evidence type="ECO:0000255" key="2"/>
<evidence type="ECO:0000255" key="3">
    <source>
        <dbReference type="PROSITE-ProRule" id="PRU00091"/>
    </source>
</evidence>
<evidence type="ECO:0000255" key="4">
    <source>
        <dbReference type="PROSITE-ProRule" id="PRU00781"/>
    </source>
</evidence>
<evidence type="ECO:0000256" key="5">
    <source>
        <dbReference type="SAM" id="MobiDB-lite"/>
    </source>
</evidence>
<evidence type="ECO:0000269" key="6">
    <source>
    </source>
</evidence>
<evidence type="ECO:0000269" key="7">
    <source>
    </source>
</evidence>
<evidence type="ECO:0000269" key="8">
    <source>
    </source>
</evidence>
<evidence type="ECO:0000305" key="9"/>
<evidence type="ECO:0000305" key="10">
    <source>
    </source>
</evidence>
<keyword id="KW-0025">Alternative splicing</keyword>
<keyword id="KW-0067">ATP-binding</keyword>
<keyword id="KW-0175">Coiled coil</keyword>
<keyword id="KW-0967">Endosome</keyword>
<keyword id="KW-0418">Kinase</keyword>
<keyword id="KW-0472">Membrane</keyword>
<keyword id="KW-0479">Metal-binding</keyword>
<keyword id="KW-0547">Nucleotide-binding</keyword>
<keyword id="KW-1185">Reference proteome</keyword>
<keyword id="KW-0808">Transferase</keyword>
<keyword id="KW-0862">Zinc</keyword>
<keyword id="KW-0863">Zinc-finger</keyword>
<reference key="1">
    <citation type="journal article" date="1999" name="Nature">
        <title>Sequence and analysis of chromosome 4 of the plant Arabidopsis thaliana.</title>
        <authorList>
            <person name="Mayer K.F.X."/>
            <person name="Schueller C."/>
            <person name="Wambutt R."/>
            <person name="Murphy G."/>
            <person name="Volckaert G."/>
            <person name="Pohl T."/>
            <person name="Duesterhoeft A."/>
            <person name="Stiekema W."/>
            <person name="Entian K.-D."/>
            <person name="Terryn N."/>
            <person name="Harris B."/>
            <person name="Ansorge W."/>
            <person name="Brandt P."/>
            <person name="Grivell L.A."/>
            <person name="Rieger M."/>
            <person name="Weichselgartner M."/>
            <person name="de Simone V."/>
            <person name="Obermaier B."/>
            <person name="Mache R."/>
            <person name="Mueller M."/>
            <person name="Kreis M."/>
            <person name="Delseny M."/>
            <person name="Puigdomenech P."/>
            <person name="Watson M."/>
            <person name="Schmidtheini T."/>
            <person name="Reichert B."/>
            <person name="Portetelle D."/>
            <person name="Perez-Alonso M."/>
            <person name="Boutry M."/>
            <person name="Bancroft I."/>
            <person name="Vos P."/>
            <person name="Hoheisel J."/>
            <person name="Zimmermann W."/>
            <person name="Wedler H."/>
            <person name="Ridley P."/>
            <person name="Langham S.-A."/>
            <person name="McCullagh B."/>
            <person name="Bilham L."/>
            <person name="Robben J."/>
            <person name="van der Schueren J."/>
            <person name="Grymonprez B."/>
            <person name="Chuang Y.-J."/>
            <person name="Vandenbussche F."/>
            <person name="Braeken M."/>
            <person name="Weltjens I."/>
            <person name="Voet M."/>
            <person name="Bastiaens I."/>
            <person name="Aert R."/>
            <person name="Defoor E."/>
            <person name="Weitzenegger T."/>
            <person name="Bothe G."/>
            <person name="Ramsperger U."/>
            <person name="Hilbert H."/>
            <person name="Braun M."/>
            <person name="Holzer E."/>
            <person name="Brandt A."/>
            <person name="Peters S."/>
            <person name="van Staveren M."/>
            <person name="Dirkse W."/>
            <person name="Mooijman P."/>
            <person name="Klein Lankhorst R."/>
            <person name="Rose M."/>
            <person name="Hauf J."/>
            <person name="Koetter P."/>
            <person name="Berneiser S."/>
            <person name="Hempel S."/>
            <person name="Feldpausch M."/>
            <person name="Lamberth S."/>
            <person name="Van den Daele H."/>
            <person name="De Keyser A."/>
            <person name="Buysshaert C."/>
            <person name="Gielen J."/>
            <person name="Villarroel R."/>
            <person name="De Clercq R."/>
            <person name="van Montagu M."/>
            <person name="Rogers J."/>
            <person name="Cronin A."/>
            <person name="Quail M.A."/>
            <person name="Bray-Allen S."/>
            <person name="Clark L."/>
            <person name="Doggett J."/>
            <person name="Hall S."/>
            <person name="Kay M."/>
            <person name="Lennard N."/>
            <person name="McLay K."/>
            <person name="Mayes R."/>
            <person name="Pettett A."/>
            <person name="Rajandream M.A."/>
            <person name="Lyne M."/>
            <person name="Benes V."/>
            <person name="Rechmann S."/>
            <person name="Borkova D."/>
            <person name="Bloecker H."/>
            <person name="Scharfe M."/>
            <person name="Grimm M."/>
            <person name="Loehnert T.-H."/>
            <person name="Dose S."/>
            <person name="de Haan M."/>
            <person name="Maarse A.C."/>
            <person name="Schaefer M."/>
            <person name="Mueller-Auer S."/>
            <person name="Gabel C."/>
            <person name="Fuchs M."/>
            <person name="Fartmann B."/>
            <person name="Granderath K."/>
            <person name="Dauner D."/>
            <person name="Herzl A."/>
            <person name="Neumann S."/>
            <person name="Argiriou A."/>
            <person name="Vitale D."/>
            <person name="Liguori R."/>
            <person name="Piravandi E."/>
            <person name="Massenet O."/>
            <person name="Quigley F."/>
            <person name="Clabauld G."/>
            <person name="Muendlein A."/>
            <person name="Felber R."/>
            <person name="Schnabl S."/>
            <person name="Hiller R."/>
            <person name="Schmidt W."/>
            <person name="Lecharny A."/>
            <person name="Aubourg S."/>
            <person name="Chefdor F."/>
            <person name="Cooke R."/>
            <person name="Berger C."/>
            <person name="Monfort A."/>
            <person name="Casacuberta E."/>
            <person name="Gibbons T."/>
            <person name="Weber N."/>
            <person name="Vandenbol M."/>
            <person name="Bargues M."/>
            <person name="Terol J."/>
            <person name="Torres A."/>
            <person name="Perez-Perez A."/>
            <person name="Purnelle B."/>
            <person name="Bent E."/>
            <person name="Johnson S."/>
            <person name="Tacon D."/>
            <person name="Jesse T."/>
            <person name="Heijnen L."/>
            <person name="Schwarz S."/>
            <person name="Scholler P."/>
            <person name="Heber S."/>
            <person name="Francs P."/>
            <person name="Bielke C."/>
            <person name="Frishman D."/>
            <person name="Haase D."/>
            <person name="Lemcke K."/>
            <person name="Mewes H.-W."/>
            <person name="Stocker S."/>
            <person name="Zaccaria P."/>
            <person name="Bevan M."/>
            <person name="Wilson R.K."/>
            <person name="de la Bastide M."/>
            <person name="Habermann K."/>
            <person name="Parnell L."/>
            <person name="Dedhia N."/>
            <person name="Gnoj L."/>
            <person name="Schutz K."/>
            <person name="Huang E."/>
            <person name="Spiegel L."/>
            <person name="Sekhon M."/>
            <person name="Murray J."/>
            <person name="Sheet P."/>
            <person name="Cordes M."/>
            <person name="Abu-Threideh J."/>
            <person name="Stoneking T."/>
            <person name="Kalicki J."/>
            <person name="Graves T."/>
            <person name="Harmon G."/>
            <person name="Edwards J."/>
            <person name="Latreille P."/>
            <person name="Courtney L."/>
            <person name="Cloud J."/>
            <person name="Abbott A."/>
            <person name="Scott K."/>
            <person name="Johnson D."/>
            <person name="Minx P."/>
            <person name="Bentley D."/>
            <person name="Fulton B."/>
            <person name="Miller N."/>
            <person name="Greco T."/>
            <person name="Kemp K."/>
            <person name="Kramer J."/>
            <person name="Fulton L."/>
            <person name="Mardis E."/>
            <person name="Dante M."/>
            <person name="Pepin K."/>
            <person name="Hillier L.W."/>
            <person name="Nelson J."/>
            <person name="Spieth J."/>
            <person name="Ryan E."/>
            <person name="Andrews S."/>
            <person name="Geisel C."/>
            <person name="Layman D."/>
            <person name="Du H."/>
            <person name="Ali J."/>
            <person name="Berghoff A."/>
            <person name="Jones K."/>
            <person name="Drone K."/>
            <person name="Cotton M."/>
            <person name="Joshu C."/>
            <person name="Antonoiu B."/>
            <person name="Zidanic M."/>
            <person name="Strong C."/>
            <person name="Sun H."/>
            <person name="Lamar B."/>
            <person name="Yordan C."/>
            <person name="Ma P."/>
            <person name="Zhong J."/>
            <person name="Preston R."/>
            <person name="Vil D."/>
            <person name="Shekher M."/>
            <person name="Matero A."/>
            <person name="Shah R."/>
            <person name="Swaby I.K."/>
            <person name="O'Shaughnessy A."/>
            <person name="Rodriguez M."/>
            <person name="Hoffman J."/>
            <person name="Till S."/>
            <person name="Granat S."/>
            <person name="Shohdy N."/>
            <person name="Hasegawa A."/>
            <person name="Hameed A."/>
            <person name="Lodhi M."/>
            <person name="Johnson A."/>
            <person name="Chen E."/>
            <person name="Marra M.A."/>
            <person name="Martienssen R."/>
            <person name="McCombie W.R."/>
        </authorList>
    </citation>
    <scope>NUCLEOTIDE SEQUENCE [LARGE SCALE GENOMIC DNA]</scope>
    <source>
        <strain>cv. Columbia</strain>
    </source>
</reference>
<reference key="2">
    <citation type="journal article" date="2017" name="Plant J.">
        <title>Araport11: a complete reannotation of the Arabidopsis thaliana reference genome.</title>
        <authorList>
            <person name="Cheng C.Y."/>
            <person name="Krishnakumar V."/>
            <person name="Chan A.P."/>
            <person name="Thibaud-Nissen F."/>
            <person name="Schobel S."/>
            <person name="Town C.D."/>
        </authorList>
    </citation>
    <scope>GENOME REANNOTATION</scope>
    <source>
        <strain>cv. Columbia</strain>
    </source>
</reference>
<reference key="3">
    <citation type="submission" date="2006-07" db="EMBL/GenBank/DDBJ databases">
        <title>Large-scale analysis of RIKEN Arabidopsis full-length (RAFL) cDNAs.</title>
        <authorList>
            <person name="Totoki Y."/>
            <person name="Seki M."/>
            <person name="Ishida J."/>
            <person name="Nakajima M."/>
            <person name="Enju A."/>
            <person name="Kamiya A."/>
            <person name="Narusaka M."/>
            <person name="Shin-i T."/>
            <person name="Nakagawa M."/>
            <person name="Sakamoto N."/>
            <person name="Oishi K."/>
            <person name="Kohara Y."/>
            <person name="Kobayashi M."/>
            <person name="Toyoda A."/>
            <person name="Sakaki Y."/>
            <person name="Sakurai T."/>
            <person name="Iida K."/>
            <person name="Akiyama K."/>
            <person name="Satou M."/>
            <person name="Toyoda T."/>
            <person name="Konagaya A."/>
            <person name="Carninci P."/>
            <person name="Kawai J."/>
            <person name="Hayashizaki Y."/>
            <person name="Shinozaki K."/>
        </authorList>
    </citation>
    <scope>NUCLEOTIDE SEQUENCE [LARGE SCALE MRNA]</scope>
    <source>
        <strain>cv. Columbia</strain>
    </source>
</reference>
<reference key="4">
    <citation type="journal article" date="2002" name="Plant Physiol.">
        <title>Inositol phospholipid metabolism in Arabidopsis. Characterized and putative isoforms of inositol phospholipid kinase and phosphoinositide-specific phospholipase C.</title>
        <authorList>
            <person name="Mueller-Roeber B."/>
            <person name="Pical C."/>
        </authorList>
    </citation>
    <scope>GENE FAMILY</scope>
    <scope>REVIEW</scope>
</reference>
<reference key="5">
    <citation type="journal article" date="2009" name="Plant Physiol.">
        <title>Arabidopsis FAB1/PIKfyve proteins are essential for development of viable pollen.</title>
        <authorList>
            <person name="Whitley P."/>
            <person name="Hinz S."/>
            <person name="Doughty J."/>
        </authorList>
    </citation>
    <scope>FUNCTION</scope>
    <scope>DISRUPTION PHENOTYPE</scope>
    <scope>TISSUE SPECIFICITY</scope>
</reference>
<reference key="6">
    <citation type="journal article" date="2011" name="Plant Physiol.">
        <title>Loss-of-function and gain-of-function mutations in FAB1A/B impair endomembrane homeostasis, conferring pleiotropic developmental abnormalities in Arabidopsis.</title>
        <authorList>
            <person name="Hirano T."/>
            <person name="Matsuzawa T."/>
            <person name="Takegawa K."/>
            <person name="Sato M.H."/>
        </authorList>
    </citation>
    <scope>FUNCTION</scope>
    <scope>DISRUPTION PHENOTYPE</scope>
    <scope>SUBCELLULAR LOCATION</scope>
    <scope>CATALYTIC ACTIVITY</scope>
</reference>
<reference key="7">
    <citation type="journal article" date="2011" name="Plant Signal. Behav.">
        <title>Arabidopsis FAB1A/B is possibly involved in the recycling of auxin transporters.</title>
        <authorList>
            <person name="Hirano T."/>
            <person name="Sato M.H."/>
        </authorList>
    </citation>
    <scope>FUNCTION</scope>
    <scope>DISRUPTION PHENOTYPE</scope>
</reference>
<dbReference type="EC" id="2.7.1.150" evidence="10"/>
<dbReference type="EMBL" id="AL035525">
    <property type="protein sequence ID" value="CAB36798.1"/>
    <property type="molecule type" value="Genomic_DNA"/>
</dbReference>
<dbReference type="EMBL" id="AL161583">
    <property type="protein sequence ID" value="CAB80041.1"/>
    <property type="molecule type" value="Genomic_DNA"/>
</dbReference>
<dbReference type="EMBL" id="CP002687">
    <property type="protein sequence ID" value="AEE86194.1"/>
    <property type="molecule type" value="Genomic_DNA"/>
</dbReference>
<dbReference type="EMBL" id="CP002687">
    <property type="protein sequence ID" value="ANM66882.1"/>
    <property type="molecule type" value="Genomic_DNA"/>
</dbReference>
<dbReference type="EMBL" id="CP002687">
    <property type="protein sequence ID" value="ANM66883.1"/>
    <property type="molecule type" value="Genomic_DNA"/>
</dbReference>
<dbReference type="EMBL" id="AK227081">
    <property type="protein sequence ID" value="BAE99133.1"/>
    <property type="molecule type" value="mRNA"/>
</dbReference>
<dbReference type="PIR" id="T05204">
    <property type="entry name" value="T05204"/>
</dbReference>
<dbReference type="RefSeq" id="NP_001320122.1">
    <molecule id="Q0WUR5-1"/>
    <property type="nucleotide sequence ID" value="NM_001342205.1"/>
</dbReference>
<dbReference type="RefSeq" id="NP_001328751.1">
    <molecule id="Q0WUR5-1"/>
    <property type="nucleotide sequence ID" value="NM_001342208.1"/>
</dbReference>
<dbReference type="RefSeq" id="NP_195050.6">
    <molecule id="Q0WUR5-1"/>
    <property type="nucleotide sequence ID" value="NM_119478.7"/>
</dbReference>
<dbReference type="SMR" id="Q0WUR5"/>
<dbReference type="FunCoup" id="Q0WUR5">
    <property type="interactions" value="3775"/>
</dbReference>
<dbReference type="STRING" id="3702.Q0WUR5"/>
<dbReference type="iPTMnet" id="Q0WUR5"/>
<dbReference type="PaxDb" id="3702-AT4G33240.1"/>
<dbReference type="ProteomicsDB" id="230784">
    <molecule id="Q0WUR5-1"/>
</dbReference>
<dbReference type="EnsemblPlants" id="AT4G33240.1">
    <molecule id="Q0WUR5-1"/>
    <property type="protein sequence ID" value="AT4G33240.1"/>
    <property type="gene ID" value="AT4G33240"/>
</dbReference>
<dbReference type="EnsemblPlants" id="AT4G33240.6">
    <molecule id="Q0WUR5-1"/>
    <property type="protein sequence ID" value="AT4G33240.6"/>
    <property type="gene ID" value="AT4G33240"/>
</dbReference>
<dbReference type="EnsemblPlants" id="AT4G33240.7">
    <molecule id="Q0WUR5-1"/>
    <property type="protein sequence ID" value="AT4G33240.7"/>
    <property type="gene ID" value="AT4G33240"/>
</dbReference>
<dbReference type="GeneID" id="829460"/>
<dbReference type="Gramene" id="AT4G33240.1">
    <molecule id="Q0WUR5-1"/>
    <property type="protein sequence ID" value="AT4G33240.1"/>
    <property type="gene ID" value="AT4G33240"/>
</dbReference>
<dbReference type="Gramene" id="AT4G33240.6">
    <molecule id="Q0WUR5-1"/>
    <property type="protein sequence ID" value="AT4G33240.6"/>
    <property type="gene ID" value="AT4G33240"/>
</dbReference>
<dbReference type="Gramene" id="AT4G33240.7">
    <molecule id="Q0WUR5-1"/>
    <property type="protein sequence ID" value="AT4G33240.7"/>
    <property type="gene ID" value="AT4G33240"/>
</dbReference>
<dbReference type="KEGG" id="ath:AT4G33240"/>
<dbReference type="Araport" id="AT4G33240"/>
<dbReference type="TAIR" id="AT4G33240">
    <property type="gene designation" value="FAB1A"/>
</dbReference>
<dbReference type="eggNOG" id="KOG0230">
    <property type="taxonomic scope" value="Eukaryota"/>
</dbReference>
<dbReference type="InParanoid" id="Q0WUR5"/>
<dbReference type="PhylomeDB" id="Q0WUR5"/>
<dbReference type="BioCyc" id="ARA:AT4G33240-MONOMER"/>
<dbReference type="PRO" id="PR:Q0WUR5"/>
<dbReference type="Proteomes" id="UP000006548">
    <property type="component" value="Chromosome 4"/>
</dbReference>
<dbReference type="ExpressionAtlas" id="Q0WUR5">
    <property type="expression patterns" value="baseline and differential"/>
</dbReference>
<dbReference type="GO" id="GO:0005768">
    <property type="term" value="C:endosome"/>
    <property type="evidence" value="ECO:0000314"/>
    <property type="project" value="TAIR"/>
</dbReference>
<dbReference type="GO" id="GO:0010008">
    <property type="term" value="C:endosome membrane"/>
    <property type="evidence" value="ECO:0007669"/>
    <property type="project" value="UniProtKB-SubCell"/>
</dbReference>
<dbReference type="GO" id="GO:0000285">
    <property type="term" value="F:1-phosphatidylinositol-3-phosphate 5-kinase activity"/>
    <property type="evidence" value="ECO:0000316"/>
    <property type="project" value="TAIR"/>
</dbReference>
<dbReference type="GO" id="GO:0005524">
    <property type="term" value="F:ATP binding"/>
    <property type="evidence" value="ECO:0007669"/>
    <property type="project" value="UniProtKB-KW"/>
</dbReference>
<dbReference type="GO" id="GO:0008270">
    <property type="term" value="F:zinc ion binding"/>
    <property type="evidence" value="ECO:0007669"/>
    <property type="project" value="UniProtKB-KW"/>
</dbReference>
<dbReference type="GO" id="GO:0010256">
    <property type="term" value="P:endomembrane system organization"/>
    <property type="evidence" value="ECO:0000316"/>
    <property type="project" value="TAIR"/>
</dbReference>
<dbReference type="GO" id="GO:0046488">
    <property type="term" value="P:phosphatidylinositol metabolic process"/>
    <property type="evidence" value="ECO:0007669"/>
    <property type="project" value="InterPro"/>
</dbReference>
<dbReference type="GO" id="GO:0009555">
    <property type="term" value="P:pollen development"/>
    <property type="evidence" value="ECO:0000316"/>
    <property type="project" value="TAIR"/>
</dbReference>
<dbReference type="GO" id="GO:0007033">
    <property type="term" value="P:vacuole organization"/>
    <property type="evidence" value="ECO:0000316"/>
    <property type="project" value="TAIR"/>
</dbReference>
<dbReference type="CDD" id="cd03334">
    <property type="entry name" value="Fab1_TCP"/>
    <property type="match status" value="1"/>
</dbReference>
<dbReference type="CDD" id="cd15725">
    <property type="entry name" value="FYVE_PIKfyve_Fab1"/>
    <property type="match status" value="1"/>
</dbReference>
<dbReference type="CDD" id="cd17300">
    <property type="entry name" value="PIPKc_PIKfyve"/>
    <property type="match status" value="1"/>
</dbReference>
<dbReference type="FunFam" id="3.30.810.10:FF:000001">
    <property type="entry name" value="1-phosphatidylinositol 3-phosphate 5-kinase FAB1"/>
    <property type="match status" value="1"/>
</dbReference>
<dbReference type="FunFam" id="3.50.7.10:FF:000007">
    <property type="entry name" value="1-phosphatidylinositol 3-phosphate 5-kinase isoform X1"/>
    <property type="match status" value="1"/>
</dbReference>
<dbReference type="FunFam" id="3.30.40.10:FF:000384">
    <property type="entry name" value="1-phosphatidylinositol-3-phosphate 5-kinase FAB1B"/>
    <property type="match status" value="1"/>
</dbReference>
<dbReference type="FunFam" id="3.30.800.10:FF:000006">
    <property type="entry name" value="1-phosphatidylinositol-3-phosphate 5-kinase FAB1B"/>
    <property type="match status" value="1"/>
</dbReference>
<dbReference type="Gene3D" id="3.30.810.10">
    <property type="entry name" value="2-Layer Sandwich"/>
    <property type="match status" value="1"/>
</dbReference>
<dbReference type="Gene3D" id="3.50.7.10">
    <property type="entry name" value="GroEL"/>
    <property type="match status" value="1"/>
</dbReference>
<dbReference type="Gene3D" id="3.30.800.10">
    <property type="entry name" value="Phosphatidylinositol Phosphate Kinase II Beta"/>
    <property type="match status" value="1"/>
</dbReference>
<dbReference type="Gene3D" id="3.30.40.10">
    <property type="entry name" value="Zinc/RING finger domain, C3HC4 (zinc finger)"/>
    <property type="match status" value="1"/>
</dbReference>
<dbReference type="InterPro" id="IPR002423">
    <property type="entry name" value="Cpn60/GroEL/TCP-1"/>
</dbReference>
<dbReference type="InterPro" id="IPR027409">
    <property type="entry name" value="GroEL-like_apical_dom_sf"/>
</dbReference>
<dbReference type="InterPro" id="IPR044769">
    <property type="entry name" value="PIKfyve_PIPKc"/>
</dbReference>
<dbReference type="InterPro" id="IPR027483">
    <property type="entry name" value="PInositol-4-P-4/5-kinase_C_sf"/>
</dbReference>
<dbReference type="InterPro" id="IPR002498">
    <property type="entry name" value="PInositol-4-P-4/5-kinase_core"/>
</dbReference>
<dbReference type="InterPro" id="IPR027484">
    <property type="entry name" value="PInositol-4-P-5-kinase_N"/>
</dbReference>
<dbReference type="InterPro" id="IPR000306">
    <property type="entry name" value="Znf_FYVE"/>
</dbReference>
<dbReference type="InterPro" id="IPR017455">
    <property type="entry name" value="Znf_FYVE-rel"/>
</dbReference>
<dbReference type="InterPro" id="IPR011011">
    <property type="entry name" value="Znf_FYVE_PHD"/>
</dbReference>
<dbReference type="InterPro" id="IPR013083">
    <property type="entry name" value="Znf_RING/FYVE/PHD"/>
</dbReference>
<dbReference type="PANTHER" id="PTHR45748">
    <property type="entry name" value="1-PHOSPHATIDYLINOSITOL 3-PHOSPHATE 5-KINASE-RELATED"/>
    <property type="match status" value="1"/>
</dbReference>
<dbReference type="PANTHER" id="PTHR45748:SF21">
    <property type="entry name" value="1-PHOSPHATIDYLINOSITOL-3-PHOSPHATE 5-KINASE FAB1A"/>
    <property type="match status" value="1"/>
</dbReference>
<dbReference type="Pfam" id="PF00118">
    <property type="entry name" value="Cpn60_TCP1"/>
    <property type="match status" value="1"/>
</dbReference>
<dbReference type="Pfam" id="PF01363">
    <property type="entry name" value="FYVE"/>
    <property type="match status" value="1"/>
</dbReference>
<dbReference type="Pfam" id="PF01504">
    <property type="entry name" value="PIP5K"/>
    <property type="match status" value="2"/>
</dbReference>
<dbReference type="SMART" id="SM00064">
    <property type="entry name" value="FYVE"/>
    <property type="match status" value="1"/>
</dbReference>
<dbReference type="SMART" id="SM00330">
    <property type="entry name" value="PIPKc"/>
    <property type="match status" value="1"/>
</dbReference>
<dbReference type="SUPFAM" id="SSF57903">
    <property type="entry name" value="FYVE/PHD zinc finger"/>
    <property type="match status" value="1"/>
</dbReference>
<dbReference type="SUPFAM" id="SSF52029">
    <property type="entry name" value="GroEL apical domain-like"/>
    <property type="match status" value="1"/>
</dbReference>
<dbReference type="SUPFAM" id="SSF56104">
    <property type="entry name" value="SAICAR synthase-like"/>
    <property type="match status" value="1"/>
</dbReference>
<dbReference type="PROSITE" id="PS51455">
    <property type="entry name" value="PIPK"/>
    <property type="match status" value="1"/>
</dbReference>
<dbReference type="PROSITE" id="PS50178">
    <property type="entry name" value="ZF_FYVE"/>
    <property type="match status" value="1"/>
</dbReference>
<accession>Q0WUR5</accession>
<accession>Q9SMY5</accession>
<proteinExistence type="evidence at protein level"/>